<comment type="subcellular location">
    <subcellularLocation>
        <location evidence="3">Membrane</location>
        <topology evidence="3">Multi-pass membrane protein</topology>
    </subcellularLocation>
</comment>
<comment type="similarity">
    <text evidence="3">Belongs to the TM2 family.</text>
</comment>
<dbReference type="EMBL" id="AL161712">
    <property type="protein sequence ID" value="CAC35892.2"/>
    <property type="molecule type" value="Genomic_DNA"/>
</dbReference>
<dbReference type="RefSeq" id="NP_499481.2">
    <property type="nucleotide sequence ID" value="NM_067080.4"/>
</dbReference>
<dbReference type="FunCoup" id="Q95PJ8">
    <property type="interactions" value="2521"/>
</dbReference>
<dbReference type="STRING" id="6239.Y66D12A.21.1"/>
<dbReference type="PaxDb" id="6239-Y66D12A.21"/>
<dbReference type="EnsemblMetazoa" id="Y66D12A.21.1">
    <property type="protein sequence ID" value="Y66D12A.21.1"/>
    <property type="gene ID" value="WBGene00013446"/>
</dbReference>
<dbReference type="GeneID" id="176581"/>
<dbReference type="KEGG" id="cel:CELE_Y66D12A.21"/>
<dbReference type="UCSC" id="Y66D12A.21">
    <property type="organism name" value="c. elegans"/>
</dbReference>
<dbReference type="AGR" id="WB:WBGene00013446"/>
<dbReference type="CTD" id="176581"/>
<dbReference type="WormBase" id="Y66D12A.21">
    <property type="protein sequence ID" value="CE47069"/>
    <property type="gene ID" value="WBGene00013446"/>
</dbReference>
<dbReference type="eggNOG" id="KOG4272">
    <property type="taxonomic scope" value="Eukaryota"/>
</dbReference>
<dbReference type="GeneTree" id="ENSGT00940000157668"/>
<dbReference type="HOGENOM" id="CLU_110523_1_0_1"/>
<dbReference type="InParanoid" id="Q95PJ8"/>
<dbReference type="OMA" id="ETFRKPH"/>
<dbReference type="OrthoDB" id="5804096at2759"/>
<dbReference type="PhylomeDB" id="Q95PJ8"/>
<dbReference type="PRO" id="PR:Q95PJ8"/>
<dbReference type="Proteomes" id="UP000001940">
    <property type="component" value="Chromosome III"/>
</dbReference>
<dbReference type="Bgee" id="WBGene00013446">
    <property type="expression patterns" value="Expressed in germ line (C elegans) and 4 other cell types or tissues"/>
</dbReference>
<dbReference type="GO" id="GO:0016020">
    <property type="term" value="C:membrane"/>
    <property type="evidence" value="ECO:0007669"/>
    <property type="project" value="UniProtKB-SubCell"/>
</dbReference>
<dbReference type="InterPro" id="IPR007829">
    <property type="entry name" value="TM2"/>
</dbReference>
<dbReference type="InterPro" id="IPR050932">
    <property type="entry name" value="TM2D1-3-like"/>
</dbReference>
<dbReference type="PANTHER" id="PTHR21016">
    <property type="entry name" value="BETA-AMYLOID BINDING PROTEIN-RELATED"/>
    <property type="match status" value="1"/>
</dbReference>
<dbReference type="PANTHER" id="PTHR21016:SF1">
    <property type="entry name" value="TM2 DOMAIN-CONTAINING PROTEIN 1"/>
    <property type="match status" value="1"/>
</dbReference>
<dbReference type="Pfam" id="PF05154">
    <property type="entry name" value="TM2"/>
    <property type="match status" value="1"/>
</dbReference>
<gene>
    <name type="ORF">Y66D12A.21</name>
</gene>
<sequence>MRQLLLTLSLISVSASDATVKCDDLDPNQYLCKNYAVDTITQQSVTCAADNSIQVMCETAEHIKCVGKDQFGIFNRTVPSACHYGAHVSYTTTVLLSIFLGFFGIDRIYLGYYALGLIKMFSLGGLFVFWLVDIILISLQLLGPADGTAYAMAYYGPKAQMIRFDSHTNFSFYTCDGCL</sequence>
<proteinExistence type="inferred from homology"/>
<protein>
    <recommendedName>
        <fullName>TM2 domain-containing protein Y66D12A.21</fullName>
    </recommendedName>
</protein>
<keyword id="KW-0325">Glycoprotein</keyword>
<keyword id="KW-0472">Membrane</keyword>
<keyword id="KW-1185">Reference proteome</keyword>
<keyword id="KW-0732">Signal</keyword>
<keyword id="KW-0812">Transmembrane</keyword>
<keyword id="KW-1133">Transmembrane helix</keyword>
<name>TM2D3_CAEEL</name>
<organism>
    <name type="scientific">Caenorhabditis elegans</name>
    <dbReference type="NCBI Taxonomy" id="6239"/>
    <lineage>
        <taxon>Eukaryota</taxon>
        <taxon>Metazoa</taxon>
        <taxon>Ecdysozoa</taxon>
        <taxon>Nematoda</taxon>
        <taxon>Chromadorea</taxon>
        <taxon>Rhabditida</taxon>
        <taxon>Rhabditina</taxon>
        <taxon>Rhabditomorpha</taxon>
        <taxon>Rhabditoidea</taxon>
        <taxon>Rhabditidae</taxon>
        <taxon>Peloderinae</taxon>
        <taxon>Caenorhabditis</taxon>
    </lineage>
</organism>
<accession>Q95PJ8</accession>
<reference key="1">
    <citation type="journal article" date="1998" name="Science">
        <title>Genome sequence of the nematode C. elegans: a platform for investigating biology.</title>
        <authorList>
            <consortium name="The C. elegans sequencing consortium"/>
        </authorList>
    </citation>
    <scope>NUCLEOTIDE SEQUENCE [LARGE SCALE GENOMIC DNA]</scope>
    <source>
        <strain>Bristol N2</strain>
    </source>
</reference>
<feature type="signal peptide" evidence="1">
    <location>
        <begin position="1"/>
        <end position="18"/>
    </location>
</feature>
<feature type="chain" id="PRO_0000298995" description="TM2 domain-containing protein Y66D12A.21" evidence="1">
    <location>
        <begin position="19"/>
        <end position="179"/>
    </location>
</feature>
<feature type="topological domain" description="Extracellular" evidence="3">
    <location>
        <begin position="19"/>
        <end position="82"/>
    </location>
</feature>
<feature type="transmembrane region" description="Helical" evidence="1">
    <location>
        <begin position="83"/>
        <end position="105"/>
    </location>
</feature>
<feature type="topological domain" description="Cytoplasmic" evidence="3">
    <location>
        <begin position="106"/>
        <end position="109"/>
    </location>
</feature>
<feature type="transmembrane region" description="Helical" evidence="1">
    <location>
        <begin position="110"/>
        <end position="132"/>
    </location>
</feature>
<feature type="topological domain" description="Extracellular" evidence="3">
    <location>
        <begin position="133"/>
        <end position="179"/>
    </location>
</feature>
<feature type="domain" description="TM2" evidence="1">
    <location>
        <begin position="88"/>
        <end position="135"/>
    </location>
</feature>
<feature type="glycosylation site" description="N-linked (GlcNAc...) asparagine" evidence="2">
    <location>
        <position position="75"/>
    </location>
</feature>
<feature type="glycosylation site" description="N-linked (GlcNAc...) asparagine" evidence="2">
    <location>
        <position position="169"/>
    </location>
</feature>
<evidence type="ECO:0000255" key="1"/>
<evidence type="ECO:0000255" key="2">
    <source>
        <dbReference type="PROSITE-ProRule" id="PRU00498"/>
    </source>
</evidence>
<evidence type="ECO:0000305" key="3"/>